<feature type="chain" id="PRO_0000284017" description="Histone chaperone ASF1">
    <location>
        <begin position="1"/>
        <end position="204"/>
    </location>
</feature>
<feature type="region of interest" description="Interaction with CHAF1B, HIRA, histone H3 and histone H4" evidence="1">
    <location>
        <begin position="1"/>
        <end position="155"/>
    </location>
</feature>
<feature type="mutagenesis site" description="Abrogates interaction with CHAF1B and HIRA." evidence="1">
    <original>ED</original>
    <variation>AA</variation>
    <location>
        <begin position="36"/>
        <end position="37"/>
    </location>
</feature>
<comment type="function">
    <text evidence="1">Histone chaperone that facilitates histone deposition and histone exchange and removal during nucleosome assembly and disassembly. Cooperates with chromatin assembly factor 1 (CAF-1) to promote replication-dependent chromatin assembly. May also cooperate with HIRA to promote replication-independent chromatin assembly.</text>
</comment>
<comment type="subunit">
    <text evidence="1">Interacts with CHAF1B, HIRA, histone H3 and histone H4.</text>
</comment>
<comment type="interaction">
    <interactant intactId="EBI-996834">
        <id>Q3C1E9</id>
    </interactant>
    <interactant intactId="EBI-996875">
        <id>Q5R1S9</id>
        <label>CHAF1B</label>
    </interactant>
    <organismsDiffer>false</organismsDiffer>
    <experiments>2</experiments>
</comment>
<comment type="interaction">
    <interactant intactId="EBI-996834">
        <id>Q3C1E9</id>
    </interactant>
    <interactant intactId="EBI-996848">
        <id>P79987</id>
        <label>HIRA</label>
    </interactant>
    <organismsDiffer>false</organismsDiffer>
    <experiments>2</experiments>
</comment>
<comment type="subcellular location">
    <subcellularLocation>
        <location evidence="1">Nucleus</location>
    </subcellularLocation>
</comment>
<comment type="PTM">
    <text evidence="1">Phosphorylated.</text>
</comment>
<comment type="similarity">
    <text evidence="2">Belongs to the ASF1 family.</text>
</comment>
<organism>
    <name type="scientific">Gallus gallus</name>
    <name type="common">Chicken</name>
    <dbReference type="NCBI Taxonomy" id="9031"/>
    <lineage>
        <taxon>Eukaryota</taxon>
        <taxon>Metazoa</taxon>
        <taxon>Chordata</taxon>
        <taxon>Craniata</taxon>
        <taxon>Vertebrata</taxon>
        <taxon>Euteleostomi</taxon>
        <taxon>Archelosauria</taxon>
        <taxon>Archosauria</taxon>
        <taxon>Dinosauria</taxon>
        <taxon>Saurischia</taxon>
        <taxon>Theropoda</taxon>
        <taxon>Coelurosauria</taxon>
        <taxon>Aves</taxon>
        <taxon>Neognathae</taxon>
        <taxon>Galloanserae</taxon>
        <taxon>Galliformes</taxon>
        <taxon>Phasianidae</taxon>
        <taxon>Phasianinae</taxon>
        <taxon>Gallus</taxon>
    </lineage>
</organism>
<dbReference type="EMBL" id="AB238225">
    <property type="protein sequence ID" value="BAE46789.1"/>
    <property type="molecule type" value="mRNA"/>
</dbReference>
<dbReference type="RefSeq" id="NP_001038155.1">
    <property type="nucleotide sequence ID" value="NM_001044690.1"/>
</dbReference>
<dbReference type="BMRB" id="Q3C1E9"/>
<dbReference type="SMR" id="Q3C1E9"/>
<dbReference type="BioGRID" id="689056">
    <property type="interactions" value="4"/>
</dbReference>
<dbReference type="FunCoup" id="Q3C1E9">
    <property type="interactions" value="1750"/>
</dbReference>
<dbReference type="IntAct" id="Q3C1E9">
    <property type="interactions" value="4"/>
</dbReference>
<dbReference type="STRING" id="9031.ENSGALP00000057957"/>
<dbReference type="PaxDb" id="9031-ENSGALP00000036573"/>
<dbReference type="Ensembl" id="ENSGALT00010036294.1">
    <property type="protein sequence ID" value="ENSGALP00010021102.1"/>
    <property type="gene ID" value="ENSGALG00010015080.1"/>
</dbReference>
<dbReference type="GeneID" id="723780"/>
<dbReference type="KEGG" id="gga:723780"/>
<dbReference type="CTD" id="25842"/>
<dbReference type="VEuPathDB" id="HostDB:geneid_723780"/>
<dbReference type="eggNOG" id="KOG3265">
    <property type="taxonomic scope" value="Eukaryota"/>
</dbReference>
<dbReference type="GeneTree" id="ENSGT00390000004692"/>
<dbReference type="InParanoid" id="Q3C1E9"/>
<dbReference type="OrthoDB" id="29755at2759"/>
<dbReference type="PhylomeDB" id="Q3C1E9"/>
<dbReference type="Reactome" id="R-GGA-2559584">
    <property type="pathway name" value="Formation of Senescence-Associated Heterochromatin Foci (SAHF)"/>
</dbReference>
<dbReference type="PRO" id="PR:Q3C1E9"/>
<dbReference type="Proteomes" id="UP000000539">
    <property type="component" value="Chromosome 3"/>
</dbReference>
<dbReference type="Bgee" id="ENSGALG00000014887">
    <property type="expression patterns" value="Expressed in spermatid and 13 other cell types or tissues"/>
</dbReference>
<dbReference type="GO" id="GO:0000785">
    <property type="term" value="C:chromatin"/>
    <property type="evidence" value="ECO:0000318"/>
    <property type="project" value="GO_Central"/>
</dbReference>
<dbReference type="GO" id="GO:0005634">
    <property type="term" value="C:nucleus"/>
    <property type="evidence" value="ECO:0000318"/>
    <property type="project" value="GO_Central"/>
</dbReference>
<dbReference type="GO" id="GO:0042393">
    <property type="term" value="F:histone binding"/>
    <property type="evidence" value="ECO:0000318"/>
    <property type="project" value="GO_Central"/>
</dbReference>
<dbReference type="GO" id="GO:0006335">
    <property type="term" value="P:DNA replication-dependent chromatin assembly"/>
    <property type="evidence" value="ECO:0000318"/>
    <property type="project" value="GO_Central"/>
</dbReference>
<dbReference type="FunFam" id="2.60.40.1490:FF:000001">
    <property type="entry name" value="Histone chaperone ASF1"/>
    <property type="match status" value="1"/>
</dbReference>
<dbReference type="Gene3D" id="2.60.40.1490">
    <property type="entry name" value="Histone chaperone ASF1-like"/>
    <property type="match status" value="1"/>
</dbReference>
<dbReference type="InterPro" id="IPR006818">
    <property type="entry name" value="ASF1-like"/>
</dbReference>
<dbReference type="InterPro" id="IPR036747">
    <property type="entry name" value="ASF1-like_sf"/>
</dbReference>
<dbReference type="PANTHER" id="PTHR12040">
    <property type="entry name" value="ANTI-SILENCING PROTEIN 1"/>
    <property type="match status" value="1"/>
</dbReference>
<dbReference type="PANTHER" id="PTHR12040:SF8">
    <property type="entry name" value="HISTONE CHAPERONE ASF1A"/>
    <property type="match status" value="1"/>
</dbReference>
<dbReference type="Pfam" id="PF04729">
    <property type="entry name" value="ASF1_hist_chap"/>
    <property type="match status" value="1"/>
</dbReference>
<dbReference type="SUPFAM" id="SSF101546">
    <property type="entry name" value="ASF1-like"/>
    <property type="match status" value="1"/>
</dbReference>
<gene>
    <name type="primary">ASF1</name>
</gene>
<sequence length="204" mass="22969">MAKVQVNNVVVLDNPSPFYNPFQFEITFECIEDLSEDLEWKIIYVGSAESEEYDQVLDSVLVGPVPAGRHMFVFQADAPNPGLIPDADAVGVTVVLITCTYRGQEFIRVGYYVNNEYTETELRENPPVKPDFSKLQRNILASNPRVTRFHINWEDNTEKLEDAESSNPNLQSLLSTDALPSASKGWSTSENSLNVMLESHMDCM</sequence>
<proteinExistence type="evidence at protein level"/>
<accession>Q3C1E9</accession>
<name>ASF1_CHICK</name>
<reference key="1">
    <citation type="journal article" date="2006" name="J. Biol. Chem.">
        <title>Asf1 is required for viability and chromatin assembly during DNA replication in vertebrate cells.</title>
        <authorList>
            <person name="Sanematsu F."/>
            <person name="Takami Y."/>
            <person name="Barman H.K."/>
            <person name="Fukagawa T."/>
            <person name="Ono T."/>
            <person name="Shibahara K."/>
            <person name="Nakayama T."/>
        </authorList>
    </citation>
    <scope>NUCLEOTIDE SEQUENCE [MRNA]</scope>
    <scope>FUNCTION</scope>
    <scope>INTERACTION WITH CHAF1B; HIRA; HISTONE H3 AND HISTONE H4</scope>
    <scope>SUBCELLULAR LOCATION</scope>
    <scope>PHOSPHORYLATION</scope>
    <scope>MUTAGENESIS OF 36-GLU-ASP-37</scope>
</reference>
<keyword id="KW-0143">Chaperone</keyword>
<keyword id="KW-0156">Chromatin regulator</keyword>
<keyword id="KW-0539">Nucleus</keyword>
<keyword id="KW-0597">Phosphoprotein</keyword>
<keyword id="KW-1185">Reference proteome</keyword>
<keyword id="KW-0804">Transcription</keyword>
<keyword id="KW-0805">Transcription regulation</keyword>
<evidence type="ECO:0000269" key="1">
    <source>
    </source>
</evidence>
<evidence type="ECO:0000305" key="2"/>
<protein>
    <recommendedName>
        <fullName>Histone chaperone ASF1</fullName>
    </recommendedName>
    <alternativeName>
        <fullName>Anti-silencing function protein 1 homolog</fullName>
    </alternativeName>
</protein>